<proteinExistence type="evidence at protein level"/>
<reference key="1">
    <citation type="journal article" date="2002" name="J. Bacteriol.">
        <title>Whole-genome comparison of Mycobacterium tuberculosis clinical and laboratory strains.</title>
        <authorList>
            <person name="Fleischmann R.D."/>
            <person name="Alland D."/>
            <person name="Eisen J.A."/>
            <person name="Carpenter L."/>
            <person name="White O."/>
            <person name="Peterson J.D."/>
            <person name="DeBoy R.T."/>
            <person name="Dodson R.J."/>
            <person name="Gwinn M.L."/>
            <person name="Haft D.H."/>
            <person name="Hickey E.K."/>
            <person name="Kolonay J.F."/>
            <person name="Nelson W.C."/>
            <person name="Umayam L.A."/>
            <person name="Ermolaeva M.D."/>
            <person name="Salzberg S.L."/>
            <person name="Delcher A."/>
            <person name="Utterback T.R."/>
            <person name="Weidman J.F."/>
            <person name="Khouri H.M."/>
            <person name="Gill J."/>
            <person name="Mikula A."/>
            <person name="Bishai W."/>
            <person name="Jacobs W.R. Jr."/>
            <person name="Venter J.C."/>
            <person name="Fraser C.M."/>
        </authorList>
    </citation>
    <scope>NUCLEOTIDE SEQUENCE [LARGE SCALE GENOMIC DNA]</scope>
    <source>
        <strain>CDC 1551 / Oshkosh</strain>
    </source>
</reference>
<reference key="2">
    <citation type="journal article" date="2002" name="Mol. Microbiol.">
        <title>Phospholipases C are involved in the virulence of Mycobacterium tuberculosis.</title>
        <authorList>
            <person name="Raynaud C."/>
            <person name="Guilhot C."/>
            <person name="Rauzier J."/>
            <person name="Bordat Y."/>
            <person name="Pelicic V."/>
            <person name="Manganelli R."/>
            <person name="Smith I."/>
            <person name="Gicquel B."/>
            <person name="Jackson M."/>
        </authorList>
    </citation>
    <scope>FUNCTION</scope>
    <scope>CATALYTIC ACTIVITY</scope>
    <scope>SUBCELLULAR LOCATION</scope>
    <scope>INDUCTION</scope>
    <scope>DISRUPTION PHENOTYPE</scope>
    <source>
        <strain>Mt103</strain>
    </source>
</reference>
<protein>
    <recommendedName>
        <fullName evidence="5">Phospholipase C A</fullName>
        <shortName evidence="5">PLC-A</shortName>
        <ecNumber evidence="3">3.1.4.3</ecNumber>
    </recommendedName>
    <alternativeName>
        <fullName>MTP40 antigen</fullName>
    </alternativeName>
</protein>
<evidence type="ECO:0000250" key="1">
    <source>
        <dbReference type="UniProtKB" id="P9WIB5"/>
    </source>
</evidence>
<evidence type="ECO:0000255" key="2">
    <source>
        <dbReference type="PROSITE-ProRule" id="PRU00648"/>
    </source>
</evidence>
<evidence type="ECO:0000269" key="3">
    <source>
    </source>
</evidence>
<evidence type="ECO:0000303" key="4">
    <source>
    </source>
</evidence>
<evidence type="ECO:0000305" key="5"/>
<sequence length="520" mass="56138">MSASPLLGMSRREFLTKLTGAGAAAFLMDWAAPVIEKAYGAGPCPGHLTDIEHIVLLMQENRSFDHYFGTLSSTNGFNAASPAFQQMGWNPMTQALDPAGVTIPFRLDTTRGPFLDGECVNDPEHQWVGMHLAWNGGANDNWLPAQATTRAGPYVPLTMGYYTRQDIPIHYLLADTFTICDGYHCSLLTGTLPNRLYWLSANIDPAGTDGGPQLVEPGFLPLQQFSWRIMPENLEDAGVSWKVYQNKGLGRFINTPISNNGLVQAFRQAADPRSNLARYGIAPTYPGDFAADVRANRLPKVSWLVPNILQSEHPALPVALGAVSMVTALRILLSNPAVWEKTALIVSYDENGGFFDHVTPPTAPPGTPGEFVTVPNIDAVPGSGGIRGPLGLGFRVPCIVISPYSRGPLMVSDTFDHTSQLKLIRARFGVPVPNMTAWRDGVVGDMTSAFNFATPPNSTRPNLSHPLLGALPKLPQCIPNVVLGTTDGALPSIPYRVPYPQVMPTQETTPVRGTPSGLCS</sequence>
<keyword id="KW-0134">Cell wall</keyword>
<keyword id="KW-0378">Hydrolase</keyword>
<keyword id="KW-1185">Reference proteome</keyword>
<keyword id="KW-0964">Secreted</keyword>
<keyword id="KW-0732">Signal</keyword>
<keyword id="KW-0843">Virulence</keyword>
<gene>
    <name evidence="4" type="primary">plcA</name>
    <name type="synonym">mpcA</name>
    <name type="synonym">mtp40</name>
    <name type="ordered locus">MT2416</name>
</gene>
<name>PHLA_MYCTO</name>
<comment type="function">
    <text evidence="1 3">Involved in virulence (PubMed:12100560). Induces cytotoxic effects on mouse macrophage cell lines, via direct or indirect enzymatic hydrolysis of cell membrane phospholipids (By similarity). Hydrolyzes phosphatidylcholine (PubMed:12100560).</text>
</comment>
<comment type="catalytic activity">
    <reaction evidence="3">
        <text>a 1,2-diacyl-sn-glycero-3-phosphocholine + H2O = phosphocholine + a 1,2-diacyl-sn-glycerol + H(+)</text>
        <dbReference type="Rhea" id="RHEA:10604"/>
        <dbReference type="ChEBI" id="CHEBI:15377"/>
        <dbReference type="ChEBI" id="CHEBI:15378"/>
        <dbReference type="ChEBI" id="CHEBI:17815"/>
        <dbReference type="ChEBI" id="CHEBI:57643"/>
        <dbReference type="ChEBI" id="CHEBI:295975"/>
        <dbReference type="EC" id="3.1.4.3"/>
    </reaction>
    <physiologicalReaction direction="left-to-right" evidence="3">
        <dbReference type="Rhea" id="RHEA:10605"/>
    </physiologicalReaction>
</comment>
<comment type="subcellular location">
    <subcellularLocation>
        <location evidence="3">Secreted</location>
        <location evidence="3">Cell wall</location>
    </subcellularLocation>
    <text evidence="3">Remains associated with the cell.</text>
</comment>
<comment type="induction">
    <text evidence="3">Expression is induced in vitro in the presence of phosphatidylcholine.</text>
</comment>
<comment type="PTM">
    <text evidence="2">Predicted to be exported by the Tat system. The position of the signal peptide cleavage has not been experimentally proven.</text>
</comment>
<comment type="disruption phenotype">
    <text evidence="3">Disruption of the gene in the clinical strain Mt103 leads to a reduction of the phospholipase C activity of the mutant. The plcABCD mutant exhibits a dramatic decrease in phospholipase C activity. The quadruple mutant is attenuated in the mouse model of infection, but not in infected THP-1 cells.</text>
</comment>
<comment type="similarity">
    <text evidence="5">Belongs to the bacterial phospholipase C family.</text>
</comment>
<dbReference type="EC" id="3.1.4.3" evidence="3"/>
<dbReference type="EMBL" id="AE000516">
    <property type="protein sequence ID" value="AAK46709.1"/>
    <property type="molecule type" value="Genomic_DNA"/>
</dbReference>
<dbReference type="PIR" id="H70662">
    <property type="entry name" value="H70662"/>
</dbReference>
<dbReference type="SMR" id="P9WIB4"/>
<dbReference type="KEGG" id="mtc:MT2416"/>
<dbReference type="HOGENOM" id="CLU_008770_2_2_11"/>
<dbReference type="Proteomes" id="UP000001020">
    <property type="component" value="Chromosome"/>
</dbReference>
<dbReference type="GO" id="GO:0005576">
    <property type="term" value="C:extracellular region"/>
    <property type="evidence" value="ECO:0007669"/>
    <property type="project" value="UniProtKB-KW"/>
</dbReference>
<dbReference type="GO" id="GO:0034480">
    <property type="term" value="F:phosphatidylcholine phospholipase C activity"/>
    <property type="evidence" value="ECO:0007669"/>
    <property type="project" value="UniProtKB-EC"/>
</dbReference>
<dbReference type="CDD" id="cd16014">
    <property type="entry name" value="PLC"/>
    <property type="match status" value="1"/>
</dbReference>
<dbReference type="FunFam" id="3.40.720.10:FF:000034">
    <property type="entry name" value="Membrane-associated phospholipase C"/>
    <property type="match status" value="1"/>
</dbReference>
<dbReference type="FunFam" id="3.40.720.10:FF:000036">
    <property type="entry name" value="Membrane-associated phospholipase C"/>
    <property type="match status" value="1"/>
</dbReference>
<dbReference type="Gene3D" id="3.40.720.10">
    <property type="entry name" value="Alkaline Phosphatase, subunit A"/>
    <property type="match status" value="2"/>
</dbReference>
<dbReference type="InterPro" id="IPR017850">
    <property type="entry name" value="Alkaline_phosphatase_core_sf"/>
</dbReference>
<dbReference type="InterPro" id="IPR007312">
    <property type="entry name" value="Phosphoesterase"/>
</dbReference>
<dbReference type="InterPro" id="IPR006311">
    <property type="entry name" value="TAT_signal"/>
</dbReference>
<dbReference type="PANTHER" id="PTHR31956:SF1">
    <property type="entry name" value="NON-SPECIFIC PHOSPHOLIPASE C1"/>
    <property type="match status" value="1"/>
</dbReference>
<dbReference type="PANTHER" id="PTHR31956">
    <property type="entry name" value="NON-SPECIFIC PHOSPHOLIPASE C4-RELATED"/>
    <property type="match status" value="1"/>
</dbReference>
<dbReference type="Pfam" id="PF04185">
    <property type="entry name" value="Phosphoesterase"/>
    <property type="match status" value="1"/>
</dbReference>
<dbReference type="PROSITE" id="PS51318">
    <property type="entry name" value="TAT"/>
    <property type="match status" value="1"/>
</dbReference>
<feature type="signal peptide" description="Tat-type signal" evidence="2">
    <location>
        <begin position="1"/>
        <end position="38"/>
    </location>
</feature>
<feature type="chain" id="PRO_0000428036" description="Phospholipase C A">
    <location>
        <begin position="39"/>
        <end position="520"/>
    </location>
</feature>
<accession>P9WIB4</accession>
<accession>L0T9D3</accession>
<accession>O08223</accession>
<accession>Q04001</accession>
<accession>Q50560</accession>
<accession>Q50771</accession>
<accession>Q50772</accession>
<accession>Q53408</accession>
<organism>
    <name type="scientific">Mycobacterium tuberculosis (strain CDC 1551 / Oshkosh)</name>
    <dbReference type="NCBI Taxonomy" id="83331"/>
    <lineage>
        <taxon>Bacteria</taxon>
        <taxon>Bacillati</taxon>
        <taxon>Actinomycetota</taxon>
        <taxon>Actinomycetes</taxon>
        <taxon>Mycobacteriales</taxon>
        <taxon>Mycobacteriaceae</taxon>
        <taxon>Mycobacterium</taxon>
        <taxon>Mycobacterium tuberculosis complex</taxon>
    </lineage>
</organism>